<accession>A9BDF8</accession>
<sequence length="402" mass="42708">MAKRSLSSLSAEELCGKRVFVRVDFNVPVNAEGDITDDTRIRAALPTIKDLIDKGARVILSAHFGRPKGQVNDAMRLTPVAQRLSELLGHTVIKTDSCIGSDAQAKAQSLNNGDVMLLENVRFIQGEEKNDPDFAKELSELAEVYVNDAFGAAHRAHASTEGVTKFLSPNVAGYLMEKELQYLQGAIDSPKRPLAAIVGGSKVSSKIGVLESLIDKCDKVLIGGGMIFTFYKARGLSVGKSLVEDDKLELAKALEEKAKSKGVELLLPTDVVLADNFSPDANSQIAQINSIPEGWMGLDIGPDSVKLFQDALEDCQTVIWNGPMGVFEFDKFANGTNSIATTLSVLSQKGCCTIIGGGDSVAAVEKAGLADKMSHISTGGGASLELLEGKTLPGVAALDELD</sequence>
<gene>
    <name evidence="1" type="primary">pgk</name>
    <name type="ordered locus">P9211_02131</name>
</gene>
<keyword id="KW-0067">ATP-binding</keyword>
<keyword id="KW-0963">Cytoplasm</keyword>
<keyword id="KW-0324">Glycolysis</keyword>
<keyword id="KW-0418">Kinase</keyword>
<keyword id="KW-0547">Nucleotide-binding</keyword>
<keyword id="KW-1185">Reference proteome</keyword>
<keyword id="KW-0808">Transferase</keyword>
<evidence type="ECO:0000255" key="1">
    <source>
        <dbReference type="HAMAP-Rule" id="MF_00145"/>
    </source>
</evidence>
<name>PGK_PROM4</name>
<protein>
    <recommendedName>
        <fullName evidence="1">Phosphoglycerate kinase</fullName>
        <ecNumber evidence="1">2.7.2.3</ecNumber>
    </recommendedName>
</protein>
<feature type="chain" id="PRO_1000096365" description="Phosphoglycerate kinase">
    <location>
        <begin position="1"/>
        <end position="402"/>
    </location>
</feature>
<feature type="binding site" evidence="1">
    <location>
        <begin position="24"/>
        <end position="26"/>
    </location>
    <ligand>
        <name>substrate</name>
    </ligand>
</feature>
<feature type="binding site" evidence="1">
    <location>
        <position position="40"/>
    </location>
    <ligand>
        <name>substrate</name>
    </ligand>
</feature>
<feature type="binding site" evidence="1">
    <location>
        <begin position="63"/>
        <end position="66"/>
    </location>
    <ligand>
        <name>substrate</name>
    </ligand>
</feature>
<feature type="binding site" evidence="1">
    <location>
        <position position="122"/>
    </location>
    <ligand>
        <name>substrate</name>
    </ligand>
</feature>
<feature type="binding site" evidence="1">
    <location>
        <position position="155"/>
    </location>
    <ligand>
        <name>substrate</name>
    </ligand>
</feature>
<feature type="binding site" evidence="1">
    <location>
        <position position="206"/>
    </location>
    <ligand>
        <name>ATP</name>
        <dbReference type="ChEBI" id="CHEBI:30616"/>
    </ligand>
</feature>
<feature type="binding site" evidence="1">
    <location>
        <position position="297"/>
    </location>
    <ligand>
        <name>ATP</name>
        <dbReference type="ChEBI" id="CHEBI:30616"/>
    </ligand>
</feature>
<feature type="binding site" evidence="1">
    <location>
        <position position="328"/>
    </location>
    <ligand>
        <name>ATP</name>
        <dbReference type="ChEBI" id="CHEBI:30616"/>
    </ligand>
</feature>
<feature type="binding site" evidence="1">
    <location>
        <begin position="357"/>
        <end position="360"/>
    </location>
    <ligand>
        <name>ATP</name>
        <dbReference type="ChEBI" id="CHEBI:30616"/>
    </ligand>
</feature>
<reference key="1">
    <citation type="journal article" date="2007" name="PLoS Genet.">
        <title>Patterns and implications of gene gain and loss in the evolution of Prochlorococcus.</title>
        <authorList>
            <person name="Kettler G.C."/>
            <person name="Martiny A.C."/>
            <person name="Huang K."/>
            <person name="Zucker J."/>
            <person name="Coleman M.L."/>
            <person name="Rodrigue S."/>
            <person name="Chen F."/>
            <person name="Lapidus A."/>
            <person name="Ferriera S."/>
            <person name="Johnson J."/>
            <person name="Steglich C."/>
            <person name="Church G.M."/>
            <person name="Richardson P."/>
            <person name="Chisholm S.W."/>
        </authorList>
    </citation>
    <scope>NUCLEOTIDE SEQUENCE [LARGE SCALE GENOMIC DNA]</scope>
    <source>
        <strain>MIT 9211</strain>
    </source>
</reference>
<comment type="catalytic activity">
    <reaction evidence="1">
        <text>(2R)-3-phosphoglycerate + ATP = (2R)-3-phospho-glyceroyl phosphate + ADP</text>
        <dbReference type="Rhea" id="RHEA:14801"/>
        <dbReference type="ChEBI" id="CHEBI:30616"/>
        <dbReference type="ChEBI" id="CHEBI:57604"/>
        <dbReference type="ChEBI" id="CHEBI:58272"/>
        <dbReference type="ChEBI" id="CHEBI:456216"/>
        <dbReference type="EC" id="2.7.2.3"/>
    </reaction>
</comment>
<comment type="pathway">
    <text evidence="1">Carbohydrate degradation; glycolysis; pyruvate from D-glyceraldehyde 3-phosphate: step 2/5.</text>
</comment>
<comment type="subunit">
    <text evidence="1">Monomer.</text>
</comment>
<comment type="subcellular location">
    <subcellularLocation>
        <location evidence="1">Cytoplasm</location>
    </subcellularLocation>
</comment>
<comment type="similarity">
    <text evidence="1">Belongs to the phosphoglycerate kinase family.</text>
</comment>
<organism>
    <name type="scientific">Prochlorococcus marinus (strain MIT 9211)</name>
    <dbReference type="NCBI Taxonomy" id="93059"/>
    <lineage>
        <taxon>Bacteria</taxon>
        <taxon>Bacillati</taxon>
        <taxon>Cyanobacteriota</taxon>
        <taxon>Cyanophyceae</taxon>
        <taxon>Synechococcales</taxon>
        <taxon>Prochlorococcaceae</taxon>
        <taxon>Prochlorococcus</taxon>
    </lineage>
</organism>
<dbReference type="EC" id="2.7.2.3" evidence="1"/>
<dbReference type="EMBL" id="CP000878">
    <property type="protein sequence ID" value="ABX08144.1"/>
    <property type="molecule type" value="Genomic_DNA"/>
</dbReference>
<dbReference type="RefSeq" id="WP_012194769.1">
    <property type="nucleotide sequence ID" value="NC_009976.1"/>
</dbReference>
<dbReference type="SMR" id="A9BDF8"/>
<dbReference type="STRING" id="93059.P9211_02131"/>
<dbReference type="KEGG" id="pmj:P9211_02131"/>
<dbReference type="eggNOG" id="COG0126">
    <property type="taxonomic scope" value="Bacteria"/>
</dbReference>
<dbReference type="HOGENOM" id="CLU_025427_0_2_3"/>
<dbReference type="OrthoDB" id="9808460at2"/>
<dbReference type="UniPathway" id="UPA00109">
    <property type="reaction ID" value="UER00185"/>
</dbReference>
<dbReference type="Proteomes" id="UP000000788">
    <property type="component" value="Chromosome"/>
</dbReference>
<dbReference type="GO" id="GO:0005829">
    <property type="term" value="C:cytosol"/>
    <property type="evidence" value="ECO:0007669"/>
    <property type="project" value="TreeGrafter"/>
</dbReference>
<dbReference type="GO" id="GO:0043531">
    <property type="term" value="F:ADP binding"/>
    <property type="evidence" value="ECO:0007669"/>
    <property type="project" value="TreeGrafter"/>
</dbReference>
<dbReference type="GO" id="GO:0005524">
    <property type="term" value="F:ATP binding"/>
    <property type="evidence" value="ECO:0007669"/>
    <property type="project" value="UniProtKB-KW"/>
</dbReference>
<dbReference type="GO" id="GO:0004618">
    <property type="term" value="F:phosphoglycerate kinase activity"/>
    <property type="evidence" value="ECO:0007669"/>
    <property type="project" value="UniProtKB-UniRule"/>
</dbReference>
<dbReference type="GO" id="GO:0006094">
    <property type="term" value="P:gluconeogenesis"/>
    <property type="evidence" value="ECO:0007669"/>
    <property type="project" value="TreeGrafter"/>
</dbReference>
<dbReference type="GO" id="GO:0006096">
    <property type="term" value="P:glycolytic process"/>
    <property type="evidence" value="ECO:0007669"/>
    <property type="project" value="UniProtKB-UniRule"/>
</dbReference>
<dbReference type="CDD" id="cd00318">
    <property type="entry name" value="Phosphoglycerate_kinase"/>
    <property type="match status" value="1"/>
</dbReference>
<dbReference type="FunFam" id="3.40.50.1260:FF:000003">
    <property type="entry name" value="Phosphoglycerate kinase"/>
    <property type="match status" value="1"/>
</dbReference>
<dbReference type="FunFam" id="3.40.50.1260:FF:000006">
    <property type="entry name" value="Phosphoglycerate kinase"/>
    <property type="match status" value="1"/>
</dbReference>
<dbReference type="Gene3D" id="3.40.50.1260">
    <property type="entry name" value="Phosphoglycerate kinase, N-terminal domain"/>
    <property type="match status" value="2"/>
</dbReference>
<dbReference type="HAMAP" id="MF_00145">
    <property type="entry name" value="Phosphoglyc_kinase"/>
    <property type="match status" value="1"/>
</dbReference>
<dbReference type="InterPro" id="IPR001576">
    <property type="entry name" value="Phosphoglycerate_kinase"/>
</dbReference>
<dbReference type="InterPro" id="IPR015911">
    <property type="entry name" value="Phosphoglycerate_kinase_CS"/>
</dbReference>
<dbReference type="InterPro" id="IPR015824">
    <property type="entry name" value="Phosphoglycerate_kinase_N"/>
</dbReference>
<dbReference type="InterPro" id="IPR036043">
    <property type="entry name" value="Phosphoglycerate_kinase_sf"/>
</dbReference>
<dbReference type="PANTHER" id="PTHR11406">
    <property type="entry name" value="PHOSPHOGLYCERATE KINASE"/>
    <property type="match status" value="1"/>
</dbReference>
<dbReference type="PANTHER" id="PTHR11406:SF23">
    <property type="entry name" value="PHOSPHOGLYCERATE KINASE 1, CHLOROPLASTIC-RELATED"/>
    <property type="match status" value="1"/>
</dbReference>
<dbReference type="Pfam" id="PF00162">
    <property type="entry name" value="PGK"/>
    <property type="match status" value="1"/>
</dbReference>
<dbReference type="PIRSF" id="PIRSF000724">
    <property type="entry name" value="Pgk"/>
    <property type="match status" value="1"/>
</dbReference>
<dbReference type="PRINTS" id="PR00477">
    <property type="entry name" value="PHGLYCKINASE"/>
</dbReference>
<dbReference type="SUPFAM" id="SSF53748">
    <property type="entry name" value="Phosphoglycerate kinase"/>
    <property type="match status" value="1"/>
</dbReference>
<dbReference type="PROSITE" id="PS00111">
    <property type="entry name" value="PGLYCERATE_KINASE"/>
    <property type="match status" value="1"/>
</dbReference>
<proteinExistence type="inferred from homology"/>